<proteinExistence type="evidence at protein level"/>
<sequence length="220" mass="24824">MSSNSTPEKVTAEHVLWYIPNKIGYVRVITAALSFFVMKNHPTAFTWLYSTSCLLDALDGTMARKYNQVSSLGAVLDMVTDRSSTAGLMCFLCVQYPQWCVFFQLMLGLDITSHYMHMYASLSAGKTSHKSVGEGESRLLHLYYTRRDVLFTICAFNELFYAGLYLQLFSNSATFGKWTTIISFPGYVFKQTANVVQLKRAALILADNDAKNANEKNKTY</sequence>
<name>PIS_YEAST</name>
<organism>
    <name type="scientific">Saccharomyces cerevisiae (strain ATCC 204508 / S288c)</name>
    <name type="common">Baker's yeast</name>
    <dbReference type="NCBI Taxonomy" id="559292"/>
    <lineage>
        <taxon>Eukaryota</taxon>
        <taxon>Fungi</taxon>
        <taxon>Dikarya</taxon>
        <taxon>Ascomycota</taxon>
        <taxon>Saccharomycotina</taxon>
        <taxon>Saccharomycetes</taxon>
        <taxon>Saccharomycetales</taxon>
        <taxon>Saccharomycetaceae</taxon>
        <taxon>Saccharomyces</taxon>
    </lineage>
</organism>
<comment type="function">
    <text evidence="6 8">Catalyzes the synthesis of phosphatidylinositol (PtdIns).</text>
</comment>
<comment type="catalytic activity">
    <reaction evidence="7 8 14">
        <text>a CDP-1,2-diacyl-sn-glycerol + myo-inositol = a 1,2-diacyl-sn-glycero-3-phospho-(1D-myo-inositol) + CMP + H(+)</text>
        <dbReference type="Rhea" id="RHEA:11580"/>
        <dbReference type="ChEBI" id="CHEBI:15378"/>
        <dbReference type="ChEBI" id="CHEBI:17268"/>
        <dbReference type="ChEBI" id="CHEBI:57880"/>
        <dbReference type="ChEBI" id="CHEBI:58332"/>
        <dbReference type="ChEBI" id="CHEBI:60377"/>
        <dbReference type="EC" id="2.7.8.11"/>
    </reaction>
</comment>
<comment type="cofactor">
    <cofactor evidence="7 8">
        <name>Mn(2+)</name>
        <dbReference type="ChEBI" id="CHEBI:29035"/>
    </cofactor>
    <cofactor evidence="7">
        <name>Mg(2+)</name>
        <dbReference type="ChEBI" id="CHEBI:18420"/>
    </cofactor>
    <text evidence="7">Divalent metal cations; Mn(2+) or Mg(2+).</text>
</comment>
<comment type="biophysicochemical properties">
    <kinetics>
        <KM evidence="8">70 uM for CDP-diacylglycerol</KM>
        <KM evidence="8">0.1 mM for inositol</KM>
        <KM evidence="7">0.08 mM for inositol</KM>
    </kinetics>
    <phDependence>
        <text evidence="7 8">Optimum pH is 8.</text>
    </phDependence>
    <temperatureDependence>
        <text evidence="8">Thermally inactivated at temperatures above 30 degrees Celsius.</text>
    </temperatureDependence>
</comment>
<comment type="subcellular location">
    <subcellularLocation>
        <location evidence="8">Microsome membrane</location>
        <topology evidence="8">Multi-pass membrane protein</topology>
    </subcellularLocation>
    <subcellularLocation>
        <location evidence="14">Endoplasmic reticulum membrane</location>
        <topology evidence="14">Multi-pass membrane protein</topology>
    </subcellularLocation>
    <subcellularLocation>
        <location evidence="9">Golgi apparatus membrane</location>
        <topology evidence="9">Multi-pass membrane protein</topology>
    </subcellularLocation>
    <subcellularLocation>
        <location evidence="4 8">Mitochondrion outer membrane</location>
        <topology evidence="4 8">Multi-pass membrane protein</topology>
    </subcellularLocation>
</comment>
<comment type="miscellaneous">
    <text>Myo-inositol-containing phospholipids are of crucial importance in the control of cellular functions.</text>
</comment>
<comment type="miscellaneous">
    <text evidence="3">Present with 3810 molecules/cell in log phase SD medium.</text>
</comment>
<comment type="similarity">
    <text evidence="12">Belongs to the CDP-alcohol phosphatidyltransferase class-I family.</text>
</comment>
<protein>
    <recommendedName>
        <fullName>CDP-diacylglycerol--inositol 3-phosphatidyltransferase</fullName>
        <ecNumber evidence="7 8 14">2.7.8.11</ecNumber>
    </recommendedName>
    <alternativeName>
        <fullName evidence="11">Phosphatidylinositol synthase</fullName>
        <shortName>PI synthase</shortName>
        <shortName>PIS</shortName>
        <shortName>PtdIns synthase</shortName>
    </alternativeName>
</protein>
<keyword id="KW-0256">Endoplasmic reticulum</keyword>
<keyword id="KW-0333">Golgi apparatus</keyword>
<keyword id="KW-0444">Lipid biosynthesis</keyword>
<keyword id="KW-0443">Lipid metabolism</keyword>
<keyword id="KW-0460">Magnesium</keyword>
<keyword id="KW-0464">Manganese</keyword>
<keyword id="KW-0472">Membrane</keyword>
<keyword id="KW-0479">Metal-binding</keyword>
<keyword id="KW-0492">Microsome</keyword>
<keyword id="KW-0496">Mitochondrion</keyword>
<keyword id="KW-1000">Mitochondrion outer membrane</keyword>
<keyword id="KW-0594">Phospholipid biosynthesis</keyword>
<keyword id="KW-1208">Phospholipid metabolism</keyword>
<keyword id="KW-1185">Reference proteome</keyword>
<keyword id="KW-0808">Transferase</keyword>
<keyword id="KW-0812">Transmembrane</keyword>
<keyword id="KW-1133">Transmembrane helix</keyword>
<gene>
    <name evidence="10" type="primary">PIS1</name>
    <name type="ordered locus">YPR113W</name>
    <name type="ORF">P8283.5</name>
</gene>
<reference key="1">
    <citation type="journal article" date="1987" name="J. Biol. Chem.">
        <title>Primary structure and disruption of the phosphatidylinositol synthase gene of Saccharomyces cerevisiae.</title>
        <authorList>
            <person name="Nikawa J."/>
            <person name="Kodaki T."/>
            <person name="Yamashita S."/>
        </authorList>
    </citation>
    <scope>NUCLEOTIDE SEQUENCE [GENOMIC DNA]</scope>
</reference>
<reference key="2">
    <citation type="journal article" date="1997" name="Nature">
        <title>The nucleotide sequence of Saccharomyces cerevisiae chromosome XVI.</title>
        <authorList>
            <person name="Bussey H."/>
            <person name="Storms R.K."/>
            <person name="Ahmed A."/>
            <person name="Albermann K."/>
            <person name="Allen E."/>
            <person name="Ansorge W."/>
            <person name="Araujo R."/>
            <person name="Aparicio A."/>
            <person name="Barrell B.G."/>
            <person name="Badcock K."/>
            <person name="Benes V."/>
            <person name="Botstein D."/>
            <person name="Bowman S."/>
            <person name="Brueckner M."/>
            <person name="Carpenter J."/>
            <person name="Cherry J.M."/>
            <person name="Chung E."/>
            <person name="Churcher C.M."/>
            <person name="Coster F."/>
            <person name="Davis K."/>
            <person name="Davis R.W."/>
            <person name="Dietrich F.S."/>
            <person name="Delius H."/>
            <person name="DiPaolo T."/>
            <person name="Dubois E."/>
            <person name="Duesterhoeft A."/>
            <person name="Duncan M."/>
            <person name="Floeth M."/>
            <person name="Fortin N."/>
            <person name="Friesen J.D."/>
            <person name="Fritz C."/>
            <person name="Goffeau A."/>
            <person name="Hall J."/>
            <person name="Hebling U."/>
            <person name="Heumann K."/>
            <person name="Hilbert H."/>
            <person name="Hillier L.W."/>
            <person name="Hunicke-Smith S."/>
            <person name="Hyman R.W."/>
            <person name="Johnston M."/>
            <person name="Kalman S."/>
            <person name="Kleine K."/>
            <person name="Komp C."/>
            <person name="Kurdi O."/>
            <person name="Lashkari D."/>
            <person name="Lew H."/>
            <person name="Lin A."/>
            <person name="Lin D."/>
            <person name="Louis E.J."/>
            <person name="Marathe R."/>
            <person name="Messenguy F."/>
            <person name="Mewes H.-W."/>
            <person name="Mirtipati S."/>
            <person name="Moestl D."/>
            <person name="Mueller-Auer S."/>
            <person name="Namath A."/>
            <person name="Nentwich U."/>
            <person name="Oefner P."/>
            <person name="Pearson D."/>
            <person name="Petel F.X."/>
            <person name="Pohl T.M."/>
            <person name="Purnelle B."/>
            <person name="Rajandream M.A."/>
            <person name="Rechmann S."/>
            <person name="Rieger M."/>
            <person name="Riles L."/>
            <person name="Roberts D."/>
            <person name="Schaefer M."/>
            <person name="Scharfe M."/>
            <person name="Scherens B."/>
            <person name="Schramm S."/>
            <person name="Schroeder M."/>
            <person name="Sdicu A.-M."/>
            <person name="Tettelin H."/>
            <person name="Urrestarazu L.A."/>
            <person name="Ushinsky S."/>
            <person name="Vierendeels F."/>
            <person name="Vissers S."/>
            <person name="Voss H."/>
            <person name="Walsh S.V."/>
            <person name="Wambutt R."/>
            <person name="Wang Y."/>
            <person name="Wedler E."/>
            <person name="Wedler H."/>
            <person name="Winnett E."/>
            <person name="Zhong W.-W."/>
            <person name="Zollner A."/>
            <person name="Vo D.H."/>
            <person name="Hani J."/>
        </authorList>
    </citation>
    <scope>NUCLEOTIDE SEQUENCE [LARGE SCALE GENOMIC DNA]</scope>
    <source>
        <strain>ATCC 204508 / S288c</strain>
    </source>
</reference>
<reference key="3">
    <citation type="journal article" date="2014" name="G3 (Bethesda)">
        <title>The reference genome sequence of Saccharomyces cerevisiae: Then and now.</title>
        <authorList>
            <person name="Engel S.R."/>
            <person name="Dietrich F.S."/>
            <person name="Fisk D.G."/>
            <person name="Binkley G."/>
            <person name="Balakrishnan R."/>
            <person name="Costanzo M.C."/>
            <person name="Dwight S.S."/>
            <person name="Hitz B.C."/>
            <person name="Karra K."/>
            <person name="Nash R.S."/>
            <person name="Weng S."/>
            <person name="Wong E.D."/>
            <person name="Lloyd P."/>
            <person name="Skrzypek M.S."/>
            <person name="Miyasato S.R."/>
            <person name="Simison M."/>
            <person name="Cherry J.M."/>
        </authorList>
    </citation>
    <scope>GENOME REANNOTATION</scope>
    <source>
        <strain>ATCC 204508 / S288c</strain>
    </source>
</reference>
<reference key="4">
    <citation type="journal article" date="1981" name="Can. J. Microbiol.">
        <title>Solubilization of microsomal-associated phosphatidylserine synthase and phosphatidylinositol synthase from Saccharomyces cerevisiae.</title>
        <authorList>
            <person name="Carman G.M."/>
            <person name="Matas J."/>
        </authorList>
    </citation>
    <scope>CATALYTIC ACTIVITY</scope>
    <scope>BIOPHYSICOCHEMICAL PROPERTIES</scope>
</reference>
<reference key="5">
    <citation type="journal article" date="1986" name="J. Bacteriol.">
        <title>Subcellular and submitochondrial localization of phospholipid-synthesizing enzymes in Saccharomyces cerevisiae.</title>
        <authorList>
            <person name="Kuchler K."/>
            <person name="Daum G."/>
            <person name="Paltauf F."/>
        </authorList>
    </citation>
    <scope>SUBCELLULAR LOCATION</scope>
</reference>
<reference key="6">
    <citation type="journal article" date="1986" name="J. Biol. Chem.">
        <title>Phosphatidylinositol synthase from Saccharomyces cerevisiae. Reconstitution, characterization, and regulation of activity.</title>
        <authorList>
            <person name="Fischl A.S."/>
            <person name="Homann M.J."/>
            <person name="Poole M.A."/>
            <person name="Carman G.M."/>
        </authorList>
    </citation>
    <scope>CATALYTIC ACTIVITY</scope>
    <scope>BIOPHYSICOCHEMICAL PROPERTIES</scope>
</reference>
<reference key="7">
    <citation type="journal article" date="1995" name="FEBS Lett.">
        <title>Phospholipid-synthesizing enzymes in Golgi membranes of the yeast, Saccharomyces cerevisiae.</title>
        <authorList>
            <person name="Leber A."/>
            <person name="Hrastnik C."/>
            <person name="Daum G."/>
        </authorList>
    </citation>
    <scope>SUBCELLULAR LOCATION</scope>
</reference>
<reference key="8">
    <citation type="journal article" date="2003" name="Nature">
        <title>Global analysis of protein expression in yeast.</title>
        <authorList>
            <person name="Ghaemmaghami S."/>
            <person name="Huh W.-K."/>
            <person name="Bower K."/>
            <person name="Howson R.W."/>
            <person name="Belle A."/>
            <person name="Dephoure N."/>
            <person name="O'Shea E.K."/>
            <person name="Weissman J.S."/>
        </authorList>
    </citation>
    <scope>LEVEL OF PROTEIN EXPRESSION [LARGE SCALE ANALYSIS]</scope>
</reference>
<reference key="9">
    <citation type="journal article" date="2006" name="J. Proteome Res.">
        <title>Toward the complete yeast mitochondrial proteome: multidimensional separation techniques for mitochondrial proteomics.</title>
        <authorList>
            <person name="Reinders J."/>
            <person name="Zahedi R.P."/>
            <person name="Pfanner N."/>
            <person name="Meisinger C."/>
            <person name="Sickmann A."/>
        </authorList>
    </citation>
    <scope>SUBCELLULAR LOCATION [LARGE SCALE ANALYSIS]</scope>
    <scope>IDENTIFICATION BY MASS SPECTROMETRY</scope>
</reference>
<reference key="10">
    <citation type="journal article" date="2006" name="Proc. Natl. Acad. Sci. U.S.A.">
        <title>A global topology map of the Saccharomyces cerevisiae membrane proteome.</title>
        <authorList>
            <person name="Kim H."/>
            <person name="Melen K."/>
            <person name="Oesterberg M."/>
            <person name="von Heijne G."/>
        </authorList>
    </citation>
    <scope>TOPOLOGY [LARGE SCALE ANALYSIS]</scope>
    <source>
        <strain>ATCC 208353 / W303-1A</strain>
    </source>
</reference>
<reference key="11">
    <citation type="journal article" date="2015" name="Biochim. Biophys. Acta">
        <title>The active site of yeast phosphatidylinositol synthase Pis1 is facing the cytosol.</title>
        <authorList>
            <person name="Bochud A."/>
            <person name="Conzelmann A."/>
        </authorList>
    </citation>
    <scope>FUNCTION</scope>
    <scope>CATALYTIC ACTIVITY</scope>
    <scope>SUBCELLULAR LOCATION</scope>
    <scope>TOPOLOGY</scope>
    <scope>MUTAGENESIS OF TYR-66; VAL-69 AND CYS-154</scope>
</reference>
<accession>P06197</accession>
<accession>D6W4B2</accession>
<dbReference type="EC" id="2.7.8.11" evidence="7 8 14"/>
<dbReference type="EMBL" id="J02697">
    <property type="protein sequence ID" value="AAA34876.1"/>
    <property type="molecule type" value="Genomic_DNA"/>
</dbReference>
<dbReference type="EMBL" id="U32445">
    <property type="protein sequence ID" value="AAB68083.1"/>
    <property type="molecule type" value="Genomic_DNA"/>
</dbReference>
<dbReference type="EMBL" id="BK006949">
    <property type="protein sequence ID" value="DAA11528.1"/>
    <property type="molecule type" value="Genomic_DNA"/>
</dbReference>
<dbReference type="PIR" id="A27409">
    <property type="entry name" value="A27409"/>
</dbReference>
<dbReference type="RefSeq" id="NP_015438.1">
    <property type="nucleotide sequence ID" value="NM_001184210.1"/>
</dbReference>
<dbReference type="SMR" id="P06197"/>
<dbReference type="BioGRID" id="36280">
    <property type="interactions" value="69"/>
</dbReference>
<dbReference type="DIP" id="DIP-3815N"/>
<dbReference type="FunCoup" id="P06197">
    <property type="interactions" value="761"/>
</dbReference>
<dbReference type="IntAct" id="P06197">
    <property type="interactions" value="42"/>
</dbReference>
<dbReference type="MINT" id="P06197"/>
<dbReference type="STRING" id="4932.YPR113W"/>
<dbReference type="PaxDb" id="4932-YPR113W"/>
<dbReference type="PeptideAtlas" id="P06197"/>
<dbReference type="EnsemblFungi" id="YPR113W_mRNA">
    <property type="protein sequence ID" value="YPR113W"/>
    <property type="gene ID" value="YPR113W"/>
</dbReference>
<dbReference type="GeneID" id="856229"/>
<dbReference type="KEGG" id="sce:YPR113W"/>
<dbReference type="AGR" id="SGD:S000006317"/>
<dbReference type="SGD" id="S000006317">
    <property type="gene designation" value="PIS1"/>
</dbReference>
<dbReference type="VEuPathDB" id="FungiDB:YPR113W"/>
<dbReference type="eggNOG" id="KOG3240">
    <property type="taxonomic scope" value="Eukaryota"/>
</dbReference>
<dbReference type="GeneTree" id="ENSGT00940000154169"/>
<dbReference type="HOGENOM" id="CLU_067602_0_0_1"/>
<dbReference type="InParanoid" id="P06197"/>
<dbReference type="OMA" id="AQTYSEN"/>
<dbReference type="OrthoDB" id="10251079at2759"/>
<dbReference type="BioCyc" id="MetaCyc:YPR113W-MONOMER"/>
<dbReference type="BioCyc" id="YEAST:YPR113W-MONOMER"/>
<dbReference type="BRENDA" id="2.7.8.11">
    <property type="organism ID" value="984"/>
</dbReference>
<dbReference type="Reactome" id="R-SCE-1483226">
    <property type="pathway name" value="Synthesis of PI"/>
</dbReference>
<dbReference type="SABIO-RK" id="P06197"/>
<dbReference type="BioGRID-ORCS" id="856229">
    <property type="hits" value="7 hits in 10 CRISPR screens"/>
</dbReference>
<dbReference type="PRO" id="PR:P06197"/>
<dbReference type="Proteomes" id="UP000002311">
    <property type="component" value="Chromosome XVI"/>
</dbReference>
<dbReference type="RNAct" id="P06197">
    <property type="molecule type" value="protein"/>
</dbReference>
<dbReference type="GO" id="GO:0005783">
    <property type="term" value="C:endoplasmic reticulum"/>
    <property type="evidence" value="ECO:0007005"/>
    <property type="project" value="SGD"/>
</dbReference>
<dbReference type="GO" id="GO:0005789">
    <property type="term" value="C:endoplasmic reticulum membrane"/>
    <property type="evidence" value="ECO:0007669"/>
    <property type="project" value="UniProtKB-SubCell"/>
</dbReference>
<dbReference type="GO" id="GO:0005794">
    <property type="term" value="C:Golgi apparatus"/>
    <property type="evidence" value="ECO:0000314"/>
    <property type="project" value="SGD"/>
</dbReference>
<dbReference type="GO" id="GO:0000139">
    <property type="term" value="C:Golgi membrane"/>
    <property type="evidence" value="ECO:0007669"/>
    <property type="project" value="UniProtKB-SubCell"/>
</dbReference>
<dbReference type="GO" id="GO:0016020">
    <property type="term" value="C:membrane"/>
    <property type="evidence" value="ECO:0000314"/>
    <property type="project" value="SGD"/>
</dbReference>
<dbReference type="GO" id="GO:0005741">
    <property type="term" value="C:mitochondrial outer membrane"/>
    <property type="evidence" value="ECO:0000314"/>
    <property type="project" value="SGD"/>
</dbReference>
<dbReference type="GO" id="GO:0005739">
    <property type="term" value="C:mitochondrion"/>
    <property type="evidence" value="ECO:0007005"/>
    <property type="project" value="SGD"/>
</dbReference>
<dbReference type="GO" id="GO:0003881">
    <property type="term" value="F:CDP-diacylglycerol-inositol 3-phosphatidyltransferase activity"/>
    <property type="evidence" value="ECO:0000314"/>
    <property type="project" value="SGD"/>
</dbReference>
<dbReference type="GO" id="GO:0046872">
    <property type="term" value="F:metal ion binding"/>
    <property type="evidence" value="ECO:0007669"/>
    <property type="project" value="UniProtKB-KW"/>
</dbReference>
<dbReference type="GO" id="GO:0006661">
    <property type="term" value="P:phosphatidylinositol biosynthetic process"/>
    <property type="evidence" value="ECO:0000314"/>
    <property type="project" value="SGD"/>
</dbReference>
<dbReference type="FunFam" id="1.20.120.1760:FF:000021">
    <property type="entry name" value="CDP-diacylglycerol--inositol 3-phosphatidyltransferase"/>
    <property type="match status" value="1"/>
</dbReference>
<dbReference type="Gene3D" id="1.20.120.1760">
    <property type="match status" value="1"/>
</dbReference>
<dbReference type="InterPro" id="IPR000462">
    <property type="entry name" value="CDP-OH_P_trans"/>
</dbReference>
<dbReference type="InterPro" id="IPR043130">
    <property type="entry name" value="CDP-OH_PTrfase_TM_dom"/>
</dbReference>
<dbReference type="InterPro" id="IPR048254">
    <property type="entry name" value="CDP_ALCOHOL_P_TRANSF_CS"/>
</dbReference>
<dbReference type="InterPro" id="IPR014387">
    <property type="entry name" value="CDP_diag_ino_3_P_euk"/>
</dbReference>
<dbReference type="PANTHER" id="PTHR15362:SF4">
    <property type="entry name" value="CDP-DIACYLGLYCEROL--INOSITOL 3-PHOSPHATIDYLTRANSFERASE"/>
    <property type="match status" value="1"/>
</dbReference>
<dbReference type="PANTHER" id="PTHR15362">
    <property type="entry name" value="PHOSPHATIDYLINOSITOL SYNTHASE"/>
    <property type="match status" value="1"/>
</dbReference>
<dbReference type="Pfam" id="PF01066">
    <property type="entry name" value="CDP-OH_P_transf"/>
    <property type="match status" value="1"/>
</dbReference>
<dbReference type="PIRSF" id="PIRSF000848">
    <property type="entry name" value="CDP_diag_ino_3_P"/>
    <property type="match status" value="1"/>
</dbReference>
<dbReference type="PROSITE" id="PS00379">
    <property type="entry name" value="CDP_ALCOHOL_P_TRANSF"/>
    <property type="match status" value="1"/>
</dbReference>
<feature type="chain" id="PRO_0000056807" description="CDP-diacylglycerol--inositol 3-phosphatidyltransferase">
    <location>
        <begin position="1"/>
        <end position="220"/>
    </location>
</feature>
<feature type="topological domain" description="Cytoplasmic" evidence="13 14">
    <location>
        <begin position="1"/>
        <end position="20"/>
    </location>
</feature>
<feature type="transmembrane region" description="Helical" evidence="2">
    <location>
        <begin position="21"/>
        <end position="41"/>
    </location>
</feature>
<feature type="topological domain" description="Lumenal" evidence="13 14">
    <location>
        <begin position="42"/>
        <end position="45"/>
    </location>
</feature>
<feature type="transmembrane region" description="Helical" evidence="2">
    <location>
        <begin position="46"/>
        <end position="66"/>
    </location>
</feature>
<feature type="topological domain" description="Cytoplasmic" evidence="13 14">
    <location>
        <begin position="67"/>
        <end position="75"/>
    </location>
</feature>
<feature type="transmembrane region" description="Helical" evidence="2 14">
    <location>
        <begin position="76"/>
        <end position="96"/>
    </location>
</feature>
<feature type="topological domain" description="Lumenal" evidence="13">
    <location>
        <begin position="97"/>
        <end position="98"/>
    </location>
</feature>
<feature type="transmembrane region" description="Helical" evidence="2 14">
    <location>
        <begin position="99"/>
        <end position="119"/>
    </location>
</feature>
<feature type="topological domain" description="Cytoplasmic" evidence="13 14">
    <location>
        <begin position="120"/>
        <end position="145"/>
    </location>
</feature>
<feature type="transmembrane region" description="Helical" evidence="2">
    <location>
        <begin position="146"/>
        <end position="166"/>
    </location>
</feature>
<feature type="topological domain" description="Lumenal" evidence="13">
    <location>
        <begin position="167"/>
        <end position="170"/>
    </location>
</feature>
<feature type="transmembrane region" description="Helical" evidence="2 14">
    <location>
        <begin position="171"/>
        <end position="191"/>
    </location>
</feature>
<feature type="topological domain" description="Cytoplasmic" evidence="5 14">
    <location>
        <begin position="192"/>
        <end position="220"/>
    </location>
</feature>
<feature type="active site" description="Proton acceptor" evidence="1">
    <location>
        <position position="81"/>
    </location>
</feature>
<feature type="binding site" evidence="1">
    <location>
        <position position="56"/>
    </location>
    <ligand>
        <name>Mg(2+)</name>
        <dbReference type="ChEBI" id="CHEBI:18420"/>
        <label>1</label>
    </ligand>
</feature>
<feature type="binding site" evidence="1">
    <location>
        <position position="56"/>
    </location>
    <ligand>
        <name>Mg(2+)</name>
        <dbReference type="ChEBI" id="CHEBI:18420"/>
        <label>2</label>
    </ligand>
</feature>
<feature type="binding site" evidence="1">
    <location>
        <position position="59"/>
    </location>
    <ligand>
        <name>Mg(2+)</name>
        <dbReference type="ChEBI" id="CHEBI:18420"/>
        <label>1</label>
    </ligand>
</feature>
<feature type="binding site" evidence="1">
    <location>
        <position position="60"/>
    </location>
    <ligand>
        <name>a CDP-1,2-diacyl-sn-glycerol</name>
        <dbReference type="ChEBI" id="CHEBI:58332"/>
    </ligand>
</feature>
<feature type="binding site" evidence="1">
    <location>
        <position position="64"/>
    </location>
    <ligand>
        <name>a CDP-1,2-diacyl-sn-glycerol</name>
        <dbReference type="ChEBI" id="CHEBI:58332"/>
    </ligand>
</feature>
<feature type="binding site" evidence="1">
    <location>
        <position position="70"/>
    </location>
    <ligand>
        <name>a CDP-1,2-diacyl-sn-glycerol</name>
        <dbReference type="ChEBI" id="CHEBI:58332"/>
    </ligand>
</feature>
<feature type="binding site" evidence="1">
    <location>
        <position position="77"/>
    </location>
    <ligand>
        <name>Mg(2+)</name>
        <dbReference type="ChEBI" id="CHEBI:18420"/>
        <label>1</label>
    </ligand>
</feature>
<feature type="binding site" evidence="1">
    <location>
        <position position="77"/>
    </location>
    <ligand>
        <name>Mg(2+)</name>
        <dbReference type="ChEBI" id="CHEBI:18420"/>
        <label>2</label>
    </ligand>
</feature>
<feature type="binding site" evidence="1">
    <location>
        <position position="81"/>
    </location>
    <ligand>
        <name>Mg(2+)</name>
        <dbReference type="ChEBI" id="CHEBI:18420"/>
        <label>2</label>
    </ligand>
</feature>
<feature type="mutagenesis site" description="Strongly decreases enzyme activity." evidence="6">
    <original>Y</original>
    <variation>C</variation>
    <location>
        <position position="66"/>
    </location>
</feature>
<feature type="mutagenesis site" description="Strongly increases enzyme activity." evidence="6">
    <original>V</original>
    <variation>C</variation>
    <location>
        <position position="69"/>
    </location>
</feature>
<feature type="mutagenesis site" description="Strongly decreases enzyme activity." evidence="6">
    <original>C</original>
    <variation>A</variation>
    <location>
        <position position="154"/>
    </location>
</feature>
<evidence type="ECO:0000250" key="1">
    <source>
        <dbReference type="UniProtKB" id="P9WPG7"/>
    </source>
</evidence>
<evidence type="ECO:0000255" key="2"/>
<evidence type="ECO:0000269" key="3">
    <source>
    </source>
</evidence>
<evidence type="ECO:0000269" key="4">
    <source>
    </source>
</evidence>
<evidence type="ECO:0000269" key="5">
    <source>
    </source>
</evidence>
<evidence type="ECO:0000269" key="6">
    <source>
    </source>
</evidence>
<evidence type="ECO:0000269" key="7">
    <source>
    </source>
</evidence>
<evidence type="ECO:0000269" key="8">
    <source>
    </source>
</evidence>
<evidence type="ECO:0000269" key="9">
    <source>
    </source>
</evidence>
<evidence type="ECO:0000303" key="10">
    <source>
    </source>
</evidence>
<evidence type="ECO:0000303" key="11">
    <source>
    </source>
</evidence>
<evidence type="ECO:0000305" key="12"/>
<evidence type="ECO:0000305" key="13">
    <source>
    </source>
</evidence>
<evidence type="ECO:0000305" key="14">
    <source>
    </source>
</evidence>